<evidence type="ECO:0000250" key="1"/>
<evidence type="ECO:0000250" key="2">
    <source>
        <dbReference type="UniProtKB" id="P00900"/>
    </source>
</evidence>
<evidence type="ECO:0000305" key="3"/>
<comment type="function">
    <text evidence="1">Part of a heterotetrameric complex that catalyzes the two-step biosynthesis of anthranilate, an intermediate in the biosynthesis of L-tryptophan. In the first step, the glutamine-binding beta subunit (TrpG) of anthranilate synthase (AS) provides the glutamine amidotransferase activity which generates ammonia as a substrate that, along with chorismate, is used in the second step, catalyzed by the large alpha subunit of AS (TrpE) to produce anthranilate. In the absence of TrpG, TrpE can synthesize anthranilate directly from chorismate and high concentrations of ammonia. In addition to synthesizing anthranilate, it also catalyzes the second step of the pathway, the transfer of the phosphoribosyl group of 5-phosphorylribose-1-pyrophosphate (PRPP) to anthranilate (By similarity).</text>
</comment>
<comment type="catalytic activity">
    <reaction>
        <text>chorismate + L-glutamine = anthranilate + pyruvate + L-glutamate + H(+)</text>
        <dbReference type="Rhea" id="RHEA:21732"/>
        <dbReference type="ChEBI" id="CHEBI:15361"/>
        <dbReference type="ChEBI" id="CHEBI:15378"/>
        <dbReference type="ChEBI" id="CHEBI:16567"/>
        <dbReference type="ChEBI" id="CHEBI:29748"/>
        <dbReference type="ChEBI" id="CHEBI:29985"/>
        <dbReference type="ChEBI" id="CHEBI:58359"/>
        <dbReference type="EC" id="4.1.3.27"/>
    </reaction>
</comment>
<comment type="catalytic activity">
    <reaction>
        <text>N-(5-phospho-beta-D-ribosyl)anthranilate + diphosphate = 5-phospho-alpha-D-ribose 1-diphosphate + anthranilate</text>
        <dbReference type="Rhea" id="RHEA:11768"/>
        <dbReference type="ChEBI" id="CHEBI:16567"/>
        <dbReference type="ChEBI" id="CHEBI:18277"/>
        <dbReference type="ChEBI" id="CHEBI:33019"/>
        <dbReference type="ChEBI" id="CHEBI:58017"/>
        <dbReference type="EC" id="2.4.2.18"/>
    </reaction>
</comment>
<comment type="pathway">
    <text>Amino-acid biosynthesis; L-tryptophan biosynthesis; L-tryptophan from chorismate: step 1/5.</text>
</comment>
<comment type="pathway">
    <text>Amino-acid biosynthesis; L-tryptophan biosynthesis; L-tryptophan from chorismate: step 2/5.</text>
</comment>
<comment type="subunit">
    <text evidence="1">Heterotetramer consisting of two non-identical subunits: a beta subunit (TrpG) and a large alpha subunit (TrpE).</text>
</comment>
<comment type="similarity">
    <text evidence="3">In the C-terminal section; belongs to the anthranilate phosphoribosyltransferase family.</text>
</comment>
<organism>
    <name type="scientific">Thermotoga maritima (strain ATCC 43589 / DSM 3109 / JCM 10099 / NBRC 100826 / MSB8)</name>
    <dbReference type="NCBI Taxonomy" id="243274"/>
    <lineage>
        <taxon>Bacteria</taxon>
        <taxon>Thermotogati</taxon>
        <taxon>Thermotogota</taxon>
        <taxon>Thermotogae</taxon>
        <taxon>Thermotogales</taxon>
        <taxon>Thermotogaceae</taxon>
        <taxon>Thermotoga</taxon>
    </lineage>
</organism>
<protein>
    <recommendedName>
        <fullName>Bifunctional protein TrpGD</fullName>
    </recommendedName>
    <domain>
        <recommendedName>
            <fullName>Anthranilate synthase component 2</fullName>
            <shortName>AS</shortName>
            <shortName>ASII</shortName>
            <ecNumber>4.1.3.27</ecNumber>
        </recommendedName>
        <alternativeName>
            <fullName>Anthranilate synthase, glutamine amidotransferase component</fullName>
        </alternativeName>
    </domain>
    <domain>
        <recommendedName>
            <fullName>Anthranilate phosphoribosyltransferase</fullName>
            <ecNumber>2.4.2.18</ecNumber>
        </recommendedName>
    </domain>
</protein>
<proteinExistence type="inferred from homology"/>
<accession>Q08654</accession>
<dbReference type="EC" id="4.1.3.27"/>
<dbReference type="EC" id="2.4.2.18"/>
<dbReference type="EMBL" id="X74075">
    <property type="protein sequence ID" value="CAA52203.1"/>
    <property type="molecule type" value="Genomic_DNA"/>
</dbReference>
<dbReference type="EMBL" id="AE000512">
    <property type="protein sequence ID" value="AAD35234.1"/>
    <property type="molecule type" value="Genomic_DNA"/>
</dbReference>
<dbReference type="EMBL" id="X92729">
    <property type="protein sequence ID" value="CAA63388.1"/>
    <property type="molecule type" value="Genomic_DNA"/>
</dbReference>
<dbReference type="PIR" id="C72414">
    <property type="entry name" value="C72414"/>
</dbReference>
<dbReference type="RefSeq" id="NP_227956.1">
    <property type="nucleotide sequence ID" value="NC_000853.1"/>
</dbReference>
<dbReference type="SMR" id="Q08654"/>
<dbReference type="FunCoup" id="Q08654">
    <property type="interactions" value="336"/>
</dbReference>
<dbReference type="STRING" id="243274.TM_0141"/>
<dbReference type="PaxDb" id="243274-THEMA_04100"/>
<dbReference type="EnsemblBacteria" id="AAD35234">
    <property type="protein sequence ID" value="AAD35234"/>
    <property type="gene ID" value="TM_0141"/>
</dbReference>
<dbReference type="KEGG" id="tma:TM0141"/>
<dbReference type="PATRIC" id="fig|243274.5.peg.140"/>
<dbReference type="eggNOG" id="COG0512">
    <property type="taxonomic scope" value="Bacteria"/>
</dbReference>
<dbReference type="eggNOG" id="COG0547">
    <property type="taxonomic scope" value="Bacteria"/>
</dbReference>
<dbReference type="InParanoid" id="Q08654"/>
<dbReference type="OrthoDB" id="9806430at2"/>
<dbReference type="BioCyc" id="MetaCyc:MONOMER-282"/>
<dbReference type="UniPathway" id="UPA00035">
    <property type="reaction ID" value="UER00040"/>
</dbReference>
<dbReference type="UniPathway" id="UPA00035">
    <property type="reaction ID" value="UER00041"/>
</dbReference>
<dbReference type="Proteomes" id="UP000008183">
    <property type="component" value="Chromosome"/>
</dbReference>
<dbReference type="GO" id="GO:0004048">
    <property type="term" value="F:anthranilate phosphoribosyltransferase activity"/>
    <property type="evidence" value="ECO:0007669"/>
    <property type="project" value="UniProtKB-UniRule"/>
</dbReference>
<dbReference type="GO" id="GO:0004049">
    <property type="term" value="F:anthranilate synthase activity"/>
    <property type="evidence" value="ECO:0007669"/>
    <property type="project" value="UniProtKB-EC"/>
</dbReference>
<dbReference type="GO" id="GO:0000287">
    <property type="term" value="F:magnesium ion binding"/>
    <property type="evidence" value="ECO:0007669"/>
    <property type="project" value="UniProtKB-UniRule"/>
</dbReference>
<dbReference type="GO" id="GO:0000162">
    <property type="term" value="P:L-tryptophan biosynthetic process"/>
    <property type="evidence" value="ECO:0000318"/>
    <property type="project" value="GO_Central"/>
</dbReference>
<dbReference type="CDD" id="cd01743">
    <property type="entry name" value="GATase1_Anthranilate_Synthase"/>
    <property type="match status" value="1"/>
</dbReference>
<dbReference type="FunFam" id="3.40.1030.10:FF:000002">
    <property type="entry name" value="Anthranilate phosphoribosyltransferase"/>
    <property type="match status" value="1"/>
</dbReference>
<dbReference type="FunFam" id="3.40.50.880:FF:000003">
    <property type="entry name" value="Anthranilate synthase component II"/>
    <property type="match status" value="1"/>
</dbReference>
<dbReference type="Gene3D" id="3.40.50.880">
    <property type="match status" value="1"/>
</dbReference>
<dbReference type="Gene3D" id="3.40.1030.10">
    <property type="entry name" value="Nucleoside phosphorylase/phosphoribosyltransferase catalytic domain"/>
    <property type="match status" value="1"/>
</dbReference>
<dbReference type="Gene3D" id="1.20.970.10">
    <property type="entry name" value="Transferase, Pyrimidine Nucleoside Phosphorylase, Chain C"/>
    <property type="match status" value="1"/>
</dbReference>
<dbReference type="HAMAP" id="MF_00211">
    <property type="entry name" value="TrpD"/>
    <property type="match status" value="1"/>
</dbReference>
<dbReference type="InterPro" id="IPR005940">
    <property type="entry name" value="Anthranilate_Pribosyl_Tfrase"/>
</dbReference>
<dbReference type="InterPro" id="IPR029062">
    <property type="entry name" value="Class_I_gatase-like"/>
</dbReference>
<dbReference type="InterPro" id="IPR017926">
    <property type="entry name" value="GATASE"/>
</dbReference>
<dbReference type="InterPro" id="IPR000312">
    <property type="entry name" value="Glycosyl_Trfase_fam3"/>
</dbReference>
<dbReference type="InterPro" id="IPR017459">
    <property type="entry name" value="Glycosyl_Trfase_fam3_N_dom"/>
</dbReference>
<dbReference type="InterPro" id="IPR036320">
    <property type="entry name" value="Glycosyl_Trfase_fam3_N_dom_sf"/>
</dbReference>
<dbReference type="InterPro" id="IPR035902">
    <property type="entry name" value="Nuc_phospho_transferase"/>
</dbReference>
<dbReference type="InterPro" id="IPR006221">
    <property type="entry name" value="TrpG/PapA_dom"/>
</dbReference>
<dbReference type="NCBIfam" id="NF011201">
    <property type="entry name" value="PRK14607.1"/>
    <property type="match status" value="1"/>
</dbReference>
<dbReference type="NCBIfam" id="TIGR01245">
    <property type="entry name" value="trpD"/>
    <property type="match status" value="1"/>
</dbReference>
<dbReference type="NCBIfam" id="TIGR00566">
    <property type="entry name" value="trpG_papA"/>
    <property type="match status" value="1"/>
</dbReference>
<dbReference type="PANTHER" id="PTHR43285">
    <property type="entry name" value="ANTHRANILATE PHOSPHORIBOSYLTRANSFERASE"/>
    <property type="match status" value="1"/>
</dbReference>
<dbReference type="PANTHER" id="PTHR43285:SF2">
    <property type="entry name" value="ANTHRANILATE PHOSPHORIBOSYLTRANSFERASE"/>
    <property type="match status" value="1"/>
</dbReference>
<dbReference type="Pfam" id="PF00117">
    <property type="entry name" value="GATase"/>
    <property type="match status" value="1"/>
</dbReference>
<dbReference type="Pfam" id="PF02885">
    <property type="entry name" value="Glycos_trans_3N"/>
    <property type="match status" value="1"/>
</dbReference>
<dbReference type="Pfam" id="PF00591">
    <property type="entry name" value="Glycos_transf_3"/>
    <property type="match status" value="1"/>
</dbReference>
<dbReference type="PRINTS" id="PR00097">
    <property type="entry name" value="ANTSNTHASEII"/>
</dbReference>
<dbReference type="PRINTS" id="PR00099">
    <property type="entry name" value="CPSGATASE"/>
</dbReference>
<dbReference type="PRINTS" id="PR00096">
    <property type="entry name" value="GATASE"/>
</dbReference>
<dbReference type="SUPFAM" id="SSF52317">
    <property type="entry name" value="Class I glutamine amidotransferase-like"/>
    <property type="match status" value="1"/>
</dbReference>
<dbReference type="SUPFAM" id="SSF52418">
    <property type="entry name" value="Nucleoside phosphorylase/phosphoribosyltransferase catalytic domain"/>
    <property type="match status" value="1"/>
</dbReference>
<dbReference type="SUPFAM" id="SSF47648">
    <property type="entry name" value="Nucleoside phosphorylase/phosphoribosyltransferase N-terminal domain"/>
    <property type="match status" value="1"/>
</dbReference>
<dbReference type="PROSITE" id="PS51273">
    <property type="entry name" value="GATASE_TYPE_1"/>
    <property type="match status" value="1"/>
</dbReference>
<name>TRPGD_THEMA</name>
<keyword id="KW-0028">Amino-acid biosynthesis</keyword>
<keyword id="KW-0057">Aromatic amino acid biosynthesis</keyword>
<keyword id="KW-0315">Glutamine amidotransferase</keyword>
<keyword id="KW-0328">Glycosyltransferase</keyword>
<keyword id="KW-0456">Lyase</keyword>
<keyword id="KW-0511">Multifunctional enzyme</keyword>
<keyword id="KW-1185">Reference proteome</keyword>
<keyword id="KW-0808">Transferase</keyword>
<keyword id="KW-0822">Tryptophan biosynthesis</keyword>
<reference key="1">
    <citation type="journal article" date="1993" name="J. Mol. Biol.">
        <title>Studies of the hyperthermophile Thermotoga maritima by random sequencing of cDNA and genomic libraries. Identification and sequencing of the trpEG (D) operon.</title>
        <authorList>
            <person name="Kim C.W."/>
            <person name="Markiewicz P.G."/>
            <person name="Lee J.J."/>
            <person name="Schierle C.F."/>
            <person name="Miller J.H."/>
        </authorList>
    </citation>
    <scope>NUCLEOTIDE SEQUENCE [GENOMIC DNA]</scope>
</reference>
<reference key="2">
    <citation type="journal article" date="1999" name="Nature">
        <title>Evidence for lateral gene transfer between Archaea and Bacteria from genome sequence of Thermotoga maritima.</title>
        <authorList>
            <person name="Nelson K.E."/>
            <person name="Clayton R.A."/>
            <person name="Gill S.R."/>
            <person name="Gwinn M.L."/>
            <person name="Dodson R.J."/>
            <person name="Haft D.H."/>
            <person name="Hickey E.K."/>
            <person name="Peterson J.D."/>
            <person name="Nelson W.C."/>
            <person name="Ketchum K.A."/>
            <person name="McDonald L.A."/>
            <person name="Utterback T.R."/>
            <person name="Malek J.A."/>
            <person name="Linher K.D."/>
            <person name="Garrett M.M."/>
            <person name="Stewart A.M."/>
            <person name="Cotton M.D."/>
            <person name="Pratt M.S."/>
            <person name="Phillips C.A."/>
            <person name="Richardson D.L."/>
            <person name="Heidelberg J.F."/>
            <person name="Sutton G.G."/>
            <person name="Fleischmann R.D."/>
            <person name="Eisen J.A."/>
            <person name="White O."/>
            <person name="Salzberg S.L."/>
            <person name="Smith H.O."/>
            <person name="Venter J.C."/>
            <person name="Fraser C.M."/>
        </authorList>
    </citation>
    <scope>NUCLEOTIDE SEQUENCE [LARGE SCALE GENOMIC DNA]</scope>
    <source>
        <strain>ATCC 43589 / DSM 3109 / JCM 10099 / NBRC 100826 / MSB8</strain>
    </source>
</reference>
<reference key="3">
    <citation type="journal article" date="1995" name="EMBO J.">
        <title>(Beta alpha)8-barrel proteins of tryptophan biosynthesis in the hyperthermophile Thermotoga maritima.</title>
        <authorList>
            <person name="Sterner R."/>
            <person name="Dahm A."/>
            <person name="Darimont B."/>
            <person name="Ivens A."/>
            <person name="Liebl W."/>
            <person name="Kirschner K."/>
        </authorList>
    </citation>
    <scope>NUCLEOTIDE SEQUENCE [GENOMIC DNA] OF 494-589</scope>
</reference>
<sequence length="589" mass="64269">MAPGRSGYRLRFRSGARISGDSEQTQGFVQEPGSCAEDPGGIVLKRVIVIDNYDSFVYNIVQYIGEVEPDCEIEVFRNDEITIEEIERKNPTHIVISPGPGRPEEAGISVDVVRHFSGKVPILGVCLGHQVIGYAFGGKIVHAKRILHGKTSKIVHNGKGVFSGVKNPLVATRYHSLVVEEASLPEVLEITAKSDDGEIMGLQHKEHPTFGVQFHPESVLTEEGKRIIKNFLNIQDIQVKKVSEETEIDIVSALKKLVEFEDLTFEESRQVMNFIMSGNATDAQIAGFLVALRMKEETGDELGGMASVMREKSIHIKAPSPRTVDTCGTGGDGFGTFNISTTTAFVVAAAGIPVAKHGNRSVSSKVGSADVLEAGGYKLEKTPEEMERELKETGFSFLFAPLLHPAMKHVMPARRQLKIRTAFNLLGPITNPARVKYQVVGVFDLSFASKLATALQRLGTERSAVVNGGFTDELTTCGKNNLLLVTQEEIVPMVLDPEELGLKSGDPEELKGPSDPKEAYRMMESVLKGEASRTQVETVALNAGVVFWLVGECDTIKDGVGKALDLIRTGEAYKKLREVMDYQKTLGNS</sequence>
<gene>
    <name type="primary">trpGD</name>
    <name type="synonym">trpD</name>
    <name type="ordered locus">TM_0141</name>
</gene>
<feature type="chain" id="PRO_0000056901" description="Bifunctional protein TrpGD">
    <location>
        <begin position="1"/>
        <end position="589"/>
    </location>
</feature>
<feature type="domain" description="Glutamine amidotransferase type-1">
    <location>
        <begin position="46"/>
        <end position="241"/>
    </location>
</feature>
<feature type="region of interest" description="Anthranilate phosphoribosyltransferase">
    <location>
        <begin position="253"/>
        <end position="589"/>
    </location>
</feature>
<feature type="active site" description="Nucleophile; for GATase activity" evidence="2">
    <location>
        <position position="126"/>
    </location>
</feature>
<feature type="active site" description="For GATase activity" evidence="1">
    <location>
        <position position="215"/>
    </location>
</feature>
<feature type="active site" description="For GATase activity" evidence="1">
    <location>
        <position position="217"/>
    </location>
</feature>
<feature type="binding site" evidence="2">
    <location>
        <begin position="99"/>
        <end position="101"/>
    </location>
    <ligand>
        <name>L-glutamine</name>
        <dbReference type="ChEBI" id="CHEBI:58359"/>
    </ligand>
</feature>
<feature type="binding site" evidence="2">
    <location>
        <position position="130"/>
    </location>
    <ligand>
        <name>L-glutamine</name>
        <dbReference type="ChEBI" id="CHEBI:58359"/>
    </ligand>
</feature>
<feature type="binding site" evidence="2">
    <location>
        <begin position="176"/>
        <end position="177"/>
    </location>
    <ligand>
        <name>L-glutamine</name>
        <dbReference type="ChEBI" id="CHEBI:58359"/>
    </ligand>
</feature>
<feature type="sequence conflict" description="In Ref. 1; CAA52203." evidence="3" ref="1">
    <original>E</original>
    <variation>G</variation>
    <location>
        <position position="384"/>
    </location>
</feature>